<reference key="1">
    <citation type="submission" date="2004-12" db="EMBL/GenBank/DDBJ databases">
        <authorList>
            <person name="Dong H.T."/>
            <person name="Peng Y.L."/>
            <person name="Chen B.S."/>
            <person name="Li Y.Z."/>
            <person name="Li D.B."/>
        </authorList>
    </citation>
    <scope>NUCLEOTIDE SEQUENCE [MRNA]</scope>
    <source>
        <strain>Y34</strain>
        <tissue>Conidium</tissue>
    </source>
</reference>
<reference key="2">
    <citation type="journal article" date="2012" name="PLoS Genet.">
        <title>Comparative analysis of the genomes of two field isolates of the rice blast fungus Magnaporthe oryzae.</title>
        <authorList>
            <person name="Xue M."/>
            <person name="Yang J."/>
            <person name="Li Z."/>
            <person name="Hu S."/>
            <person name="Yao N."/>
            <person name="Dean R.A."/>
            <person name="Zhao W."/>
            <person name="Shen M."/>
            <person name="Zhang H."/>
            <person name="Li C."/>
            <person name="Liu L."/>
            <person name="Cao L."/>
            <person name="Xu X."/>
            <person name="Xing Y."/>
            <person name="Hsiang T."/>
            <person name="Zhang Z."/>
            <person name="Xu J.-R."/>
            <person name="Peng Y.-L."/>
        </authorList>
    </citation>
    <scope>NUCLEOTIDE SEQUENCE [LARGE SCALE GENOMIC DNA]</scope>
    <source>
        <strain>Y34</strain>
    </source>
</reference>
<feature type="initiator methionine" description="Removed" evidence="1">
    <location>
        <position position="1"/>
    </location>
</feature>
<feature type="chain" id="PRO_0000423549" description="Small ribosomal subunit protein eS1">
    <location>
        <begin position="2"/>
        <end position="256"/>
    </location>
</feature>
<feature type="region of interest" description="Disordered" evidence="2">
    <location>
        <begin position="1"/>
        <end position="22"/>
    </location>
</feature>
<feature type="compositionally biased region" description="Basic residues" evidence="2">
    <location>
        <begin position="1"/>
        <end position="18"/>
    </location>
</feature>
<feature type="modified residue" description="N-acetylalanine; partial" evidence="1">
    <location>
        <position position="2"/>
    </location>
</feature>
<feature type="sequence conflict" description="In Ref. 1; AAX07667." evidence="3" ref="1">
    <original>F</original>
    <variation>V</variation>
    <location>
        <position position="142"/>
    </location>
</feature>
<protein>
    <recommendedName>
        <fullName evidence="1">Small ribosomal subunit protein eS1</fullName>
    </recommendedName>
    <alternativeName>
        <fullName evidence="3">40S ribosomal protein S1</fullName>
    </alternativeName>
</protein>
<comment type="subunit">
    <text evidence="1">Component of the small ribosomal subunit. Mature ribosomes consist of a small (40S) and a large (60S) subunit. The 40S subunit contains about 33 different proteins and 1 molecule of RNA (18S). The 60S subunit contains about 49 different proteins and 3 molecules of RNA (25S, 5.8S and 5S).</text>
</comment>
<comment type="subcellular location">
    <subcellularLocation>
        <location evidence="1">Cytoplasm</location>
    </subcellularLocation>
</comment>
<comment type="similarity">
    <text evidence="1">Belongs to the eukaryotic ribosomal protein eS1 family.</text>
</comment>
<name>RS3A_PYRO3</name>
<gene>
    <name evidence="1" type="primary">RPS1</name>
    <name type="ORF">OOU_Y34scaffold00140g16</name>
</gene>
<evidence type="ECO:0000255" key="1">
    <source>
        <dbReference type="HAMAP-Rule" id="MF_03122"/>
    </source>
</evidence>
<evidence type="ECO:0000256" key="2">
    <source>
        <dbReference type="SAM" id="MobiDB-lite"/>
    </source>
</evidence>
<evidence type="ECO:0000305" key="3"/>
<sequence length="256" mass="29275">MAVGKNKRLSKGKKGLKKKTQDPFARKDWYGIKAPAPFNIRDVGKTLVNRSSGMKNANDALKGRIFEVSLADLQKDEDHAFRKIKLRVDEVQGKNCLTNFHGLDFTSDKLRSLVRKWQSLIEANVTVKTTDDYLLRLFAIAFTKRRPNQIKKTTYAASSQIRAIRRKMTEIIQREASTCTLQQLTNKLIPEVIGREIEKATQGIYPLQNVHIRKVKLLKQPKFDLGGLLALHGESTTDEQGQKVEREFKERVLEEV</sequence>
<dbReference type="EMBL" id="AY849647">
    <property type="protein sequence ID" value="AAX07667.1"/>
    <property type="molecule type" value="mRNA"/>
</dbReference>
<dbReference type="EMBL" id="JH793818">
    <property type="protein sequence ID" value="ELQ43608.1"/>
    <property type="molecule type" value="Genomic_DNA"/>
</dbReference>
<dbReference type="SMR" id="L7IK19"/>
<dbReference type="OrthoDB" id="631105at147550"/>
<dbReference type="Proteomes" id="UP000011086">
    <property type="component" value="Unassembled WGS sequence"/>
</dbReference>
<dbReference type="GO" id="GO:0022627">
    <property type="term" value="C:cytosolic small ribosomal subunit"/>
    <property type="evidence" value="ECO:0007669"/>
    <property type="project" value="UniProtKB-UniRule"/>
</dbReference>
<dbReference type="GO" id="GO:0003735">
    <property type="term" value="F:structural constituent of ribosome"/>
    <property type="evidence" value="ECO:0007669"/>
    <property type="project" value="UniProtKB-UniRule"/>
</dbReference>
<dbReference type="GO" id="GO:0006412">
    <property type="term" value="P:translation"/>
    <property type="evidence" value="ECO:0007669"/>
    <property type="project" value="UniProtKB-UniRule"/>
</dbReference>
<dbReference type="HAMAP" id="MF_03122">
    <property type="entry name" value="Ribosomal_eS1_euk"/>
    <property type="match status" value="1"/>
</dbReference>
<dbReference type="InterPro" id="IPR001593">
    <property type="entry name" value="Ribosomal_eS1"/>
</dbReference>
<dbReference type="InterPro" id="IPR018281">
    <property type="entry name" value="Ribosomal_eS1_CS"/>
</dbReference>
<dbReference type="InterPro" id="IPR027500">
    <property type="entry name" value="Ribosomal_eS1_euk"/>
</dbReference>
<dbReference type="PANTHER" id="PTHR11830">
    <property type="entry name" value="40S RIBOSOMAL PROTEIN S3A"/>
    <property type="match status" value="1"/>
</dbReference>
<dbReference type="Pfam" id="PF01015">
    <property type="entry name" value="Ribosomal_S3Ae"/>
    <property type="match status" value="1"/>
</dbReference>
<dbReference type="SMART" id="SM01397">
    <property type="entry name" value="Ribosomal_S3Ae"/>
    <property type="match status" value="1"/>
</dbReference>
<dbReference type="PROSITE" id="PS01191">
    <property type="entry name" value="RIBOSOMAL_S3AE"/>
    <property type="match status" value="1"/>
</dbReference>
<organism>
    <name type="scientific">Pyricularia oryzae (strain Y34)</name>
    <name type="common">Rice blast fungus</name>
    <name type="synonym">Magnaporthe oryzae</name>
    <dbReference type="NCBI Taxonomy" id="1143189"/>
    <lineage>
        <taxon>Eukaryota</taxon>
        <taxon>Fungi</taxon>
        <taxon>Dikarya</taxon>
        <taxon>Ascomycota</taxon>
        <taxon>Pezizomycotina</taxon>
        <taxon>Sordariomycetes</taxon>
        <taxon>Sordariomycetidae</taxon>
        <taxon>Magnaporthales</taxon>
        <taxon>Pyriculariaceae</taxon>
        <taxon>Pyricularia</taxon>
    </lineage>
</organism>
<proteinExistence type="evidence at transcript level"/>
<keyword id="KW-0007">Acetylation</keyword>
<keyword id="KW-0963">Cytoplasm</keyword>
<keyword id="KW-0687">Ribonucleoprotein</keyword>
<keyword id="KW-0689">Ribosomal protein</keyword>
<accession>L7IK19</accession>
<accession>A4R1I7</accession>
<accession>G4MNC9</accession>
<accession>Q5EMY6</accession>